<gene>
    <name type="primary">FPG1</name>
    <name type="synonym">FPG2</name>
    <name type="ordered locus">At1g52500</name>
    <name type="ORF">F6D8.28</name>
</gene>
<proteinExistence type="evidence at protein level"/>
<protein>
    <recommendedName>
        <fullName>Formamidopyrimidine-DNA glycosylase</fullName>
        <shortName>Fapy-DNA glycosylase</shortName>
        <ecNumber>3.2.2.23</ecNumber>
        <ecNumber>4.2.99.18</ecNumber>
    </recommendedName>
    <alternativeName>
        <fullName>DNA-(apurinic or apyrimidinic site) lyase FPG1</fullName>
    </alternativeName>
    <alternativeName>
        <fullName>Formamidopyrimidine-DNA glycosylase 1</fullName>
        <shortName>AtFPG-1</shortName>
    </alternativeName>
    <alternativeName>
        <fullName>Formamidopyrimidine-DNA glycosylase 2</fullName>
        <shortName>AtFPG-2</shortName>
    </alternativeName>
    <alternativeName>
        <fullName>Protein MutM homolog 1</fullName>
        <shortName>AtMMH-1</shortName>
    </alternativeName>
    <alternativeName>
        <fullName>Protein MutM homolog 2</fullName>
        <shortName>AtMMH-2</shortName>
    </alternativeName>
</protein>
<dbReference type="EC" id="3.2.2.23"/>
<dbReference type="EC" id="4.2.99.18"/>
<dbReference type="EMBL" id="AB010690">
    <property type="protein sequence ID" value="BAA32702.1"/>
    <property type="molecule type" value="Genomic_DNA"/>
</dbReference>
<dbReference type="EMBL" id="AB010690">
    <property type="protein sequence ID" value="BAA32703.1"/>
    <property type="molecule type" value="Genomic_DNA"/>
</dbReference>
<dbReference type="EMBL" id="AF099970">
    <property type="protein sequence ID" value="AAC97952.1"/>
    <property type="molecule type" value="mRNA"/>
</dbReference>
<dbReference type="EMBL" id="AF099971">
    <property type="protein sequence ID" value="AAC97953.1"/>
    <property type="molecule type" value="mRNA"/>
</dbReference>
<dbReference type="EMBL" id="AC008016">
    <property type="protein sequence ID" value="AAD55612.1"/>
    <property type="molecule type" value="Genomic_DNA"/>
</dbReference>
<dbReference type="EMBL" id="AC008016">
    <property type="protein sequence ID" value="AAD55613.1"/>
    <property type="molecule type" value="Genomic_DNA"/>
</dbReference>
<dbReference type="EMBL" id="CP002684">
    <property type="protein sequence ID" value="AEE32814.1"/>
    <property type="molecule type" value="Genomic_DNA"/>
</dbReference>
<dbReference type="EMBL" id="CP002684">
    <property type="protein sequence ID" value="AEE32815.1"/>
    <property type="molecule type" value="Genomic_DNA"/>
</dbReference>
<dbReference type="EMBL" id="CP002684">
    <property type="protein sequence ID" value="ANM60729.1"/>
    <property type="molecule type" value="Genomic_DNA"/>
</dbReference>
<dbReference type="EMBL" id="BT043496">
    <property type="protein sequence ID" value="ACG58696.1"/>
    <property type="molecule type" value="mRNA"/>
</dbReference>
<dbReference type="PIR" id="E96565">
    <property type="entry name" value="E96565"/>
</dbReference>
<dbReference type="PIR" id="T51713">
    <property type="entry name" value="T51713"/>
</dbReference>
<dbReference type="PIR" id="T51714">
    <property type="entry name" value="T51714"/>
</dbReference>
<dbReference type="RefSeq" id="NP_001322993.1">
    <molecule id="O80358-2"/>
    <property type="nucleotide sequence ID" value="NM_001333547.1"/>
</dbReference>
<dbReference type="RefSeq" id="NP_564608.1">
    <molecule id="O80358-1"/>
    <property type="nucleotide sequence ID" value="NM_104128.3"/>
</dbReference>
<dbReference type="RefSeq" id="NP_849798.1">
    <molecule id="O80358-2"/>
    <property type="nucleotide sequence ID" value="NM_179467.3"/>
</dbReference>
<dbReference type="PDB" id="3TWK">
    <property type="method" value="X-ray"/>
    <property type="resolution" value="2.30 A"/>
    <property type="chains" value="A/B=1-281"/>
</dbReference>
<dbReference type="PDB" id="3TWL">
    <property type="method" value="X-ray"/>
    <property type="resolution" value="1.70 A"/>
    <property type="chains" value="A=1-304"/>
</dbReference>
<dbReference type="PDB" id="3TWM">
    <property type="method" value="X-ray"/>
    <property type="resolution" value="2.80 A"/>
    <property type="chains" value="A/B=1-304"/>
</dbReference>
<dbReference type="PDBsum" id="3TWK"/>
<dbReference type="PDBsum" id="3TWL"/>
<dbReference type="PDBsum" id="3TWM"/>
<dbReference type="SMR" id="O80358"/>
<dbReference type="FunCoup" id="O80358">
    <property type="interactions" value="1064"/>
</dbReference>
<dbReference type="STRING" id="3702.O80358"/>
<dbReference type="iPTMnet" id="O80358"/>
<dbReference type="PaxDb" id="3702-AT1G52500.2"/>
<dbReference type="ProteomicsDB" id="229997">
    <molecule id="O80358-1"/>
</dbReference>
<dbReference type="EnsemblPlants" id="AT1G52500.1">
    <molecule id="O80358-2"/>
    <property type="protein sequence ID" value="AT1G52500.1"/>
    <property type="gene ID" value="AT1G52500"/>
</dbReference>
<dbReference type="EnsemblPlants" id="AT1G52500.2">
    <molecule id="O80358-1"/>
    <property type="protein sequence ID" value="AT1G52500.2"/>
    <property type="gene ID" value="AT1G52500"/>
</dbReference>
<dbReference type="EnsemblPlants" id="AT1G52500.3">
    <molecule id="O80358-2"/>
    <property type="protein sequence ID" value="AT1G52500.3"/>
    <property type="gene ID" value="AT1G52500"/>
</dbReference>
<dbReference type="Gramene" id="AT1G52500.1">
    <molecule id="O80358-2"/>
    <property type="protein sequence ID" value="AT1G52500.1"/>
    <property type="gene ID" value="AT1G52500"/>
</dbReference>
<dbReference type="Gramene" id="AT1G52500.2">
    <molecule id="O80358-1"/>
    <property type="protein sequence ID" value="AT1G52500.2"/>
    <property type="gene ID" value="AT1G52500"/>
</dbReference>
<dbReference type="Gramene" id="AT1G52500.3">
    <molecule id="O80358-2"/>
    <property type="protein sequence ID" value="AT1G52500.3"/>
    <property type="gene ID" value="AT1G52500"/>
</dbReference>
<dbReference type="KEGG" id="ath:AT1G52500"/>
<dbReference type="Araport" id="AT1G52500"/>
<dbReference type="TAIR" id="AT1G52500">
    <property type="gene designation" value="MMH-1"/>
</dbReference>
<dbReference type="eggNOG" id="ENOG502QVDB">
    <property type="taxonomic scope" value="Eukaryota"/>
</dbReference>
<dbReference type="HOGENOM" id="CLU_038423_0_0_1"/>
<dbReference type="InParanoid" id="O80358"/>
<dbReference type="OMA" id="WMNRSSY"/>
<dbReference type="PhylomeDB" id="O80358"/>
<dbReference type="BRENDA" id="3.2.2.23">
    <property type="organism ID" value="399"/>
</dbReference>
<dbReference type="CD-CODE" id="4299E36E">
    <property type="entry name" value="Nucleolus"/>
</dbReference>
<dbReference type="EvolutionaryTrace" id="O80358"/>
<dbReference type="PRO" id="PR:O80358"/>
<dbReference type="Proteomes" id="UP000006548">
    <property type="component" value="Chromosome 1"/>
</dbReference>
<dbReference type="ExpressionAtlas" id="O80358">
    <property type="expression patterns" value="baseline and differential"/>
</dbReference>
<dbReference type="GO" id="GO:0005634">
    <property type="term" value="C:nucleus"/>
    <property type="evidence" value="ECO:0007669"/>
    <property type="project" value="UniProtKB-SubCell"/>
</dbReference>
<dbReference type="GO" id="GO:0140078">
    <property type="term" value="F:class I DNA-(apurinic or apyrimidinic site) endonuclease activity"/>
    <property type="evidence" value="ECO:0007669"/>
    <property type="project" value="UniProtKB-EC"/>
</dbReference>
<dbReference type="GO" id="GO:0003684">
    <property type="term" value="F:damaged DNA binding"/>
    <property type="evidence" value="ECO:0007669"/>
    <property type="project" value="InterPro"/>
</dbReference>
<dbReference type="GO" id="GO:0019104">
    <property type="term" value="F:DNA N-glycosylase activity"/>
    <property type="evidence" value="ECO:0000314"/>
    <property type="project" value="TAIR"/>
</dbReference>
<dbReference type="GO" id="GO:0008534">
    <property type="term" value="F:oxidized purine nucleobase lesion DNA N-glycosylase activity"/>
    <property type="evidence" value="ECO:0007669"/>
    <property type="project" value="UniProtKB-EC"/>
</dbReference>
<dbReference type="GO" id="GO:0008270">
    <property type="term" value="F:zinc ion binding"/>
    <property type="evidence" value="ECO:0007669"/>
    <property type="project" value="InterPro"/>
</dbReference>
<dbReference type="GO" id="GO:0006284">
    <property type="term" value="P:base-excision repair"/>
    <property type="evidence" value="ECO:0007669"/>
    <property type="project" value="InterPro"/>
</dbReference>
<dbReference type="GO" id="GO:0006281">
    <property type="term" value="P:DNA repair"/>
    <property type="evidence" value="ECO:0000314"/>
    <property type="project" value="TAIR"/>
</dbReference>
<dbReference type="GO" id="GO:0006979">
    <property type="term" value="P:response to oxidative stress"/>
    <property type="evidence" value="ECO:0000304"/>
    <property type="project" value="TAIR"/>
</dbReference>
<dbReference type="CDD" id="cd08972">
    <property type="entry name" value="PF_Nei_N"/>
    <property type="match status" value="1"/>
</dbReference>
<dbReference type="FunFam" id="1.10.8.50:FF:000009">
    <property type="entry name" value="Formamidopyrimidine-DNA glycosylase"/>
    <property type="match status" value="1"/>
</dbReference>
<dbReference type="FunFam" id="3.20.190.10:FF:000004">
    <property type="entry name" value="Putative Formamidopyrimidine-DNA glycosylase"/>
    <property type="match status" value="1"/>
</dbReference>
<dbReference type="Gene3D" id="1.10.8.50">
    <property type="match status" value="1"/>
</dbReference>
<dbReference type="Gene3D" id="3.20.190.10">
    <property type="entry name" value="MutM-like, N-terminal"/>
    <property type="match status" value="1"/>
</dbReference>
<dbReference type="InterPro" id="IPR015886">
    <property type="entry name" value="DNA_glyclase/AP_lyase_DNA-bd"/>
</dbReference>
<dbReference type="InterPro" id="IPR020629">
    <property type="entry name" value="Formamido-pyr_DNA_Glyclase"/>
</dbReference>
<dbReference type="InterPro" id="IPR049332">
    <property type="entry name" value="Fpg-like_C"/>
</dbReference>
<dbReference type="InterPro" id="IPR012319">
    <property type="entry name" value="FPG_cat"/>
</dbReference>
<dbReference type="InterPro" id="IPR035937">
    <property type="entry name" value="MutM-like_N-ter"/>
</dbReference>
<dbReference type="InterPro" id="IPR010979">
    <property type="entry name" value="Ribosomal_uS13-like_H2TH"/>
</dbReference>
<dbReference type="NCBIfam" id="TIGR00577">
    <property type="entry name" value="fpg"/>
    <property type="match status" value="1"/>
</dbReference>
<dbReference type="PANTHER" id="PTHR22993">
    <property type="entry name" value="FORMAMIDOPYRIMIDINE-DNA GLYCOSYLASE"/>
    <property type="match status" value="1"/>
</dbReference>
<dbReference type="PANTHER" id="PTHR22993:SF9">
    <property type="entry name" value="FORMAMIDOPYRIMIDINE-DNA GLYCOSYLASE"/>
    <property type="match status" value="1"/>
</dbReference>
<dbReference type="Pfam" id="PF01149">
    <property type="entry name" value="Fapy_DNA_glyco"/>
    <property type="match status" value="1"/>
</dbReference>
<dbReference type="Pfam" id="PF21218">
    <property type="entry name" value="Fpg-like_C"/>
    <property type="match status" value="1"/>
</dbReference>
<dbReference type="Pfam" id="PF06831">
    <property type="entry name" value="H2TH"/>
    <property type="match status" value="1"/>
</dbReference>
<dbReference type="SMART" id="SM00898">
    <property type="entry name" value="Fapy_DNA_glyco"/>
    <property type="match status" value="1"/>
</dbReference>
<dbReference type="SMART" id="SM01232">
    <property type="entry name" value="H2TH"/>
    <property type="match status" value="1"/>
</dbReference>
<dbReference type="SUPFAM" id="SSF81624">
    <property type="entry name" value="N-terminal domain of MutM-like DNA repair proteins"/>
    <property type="match status" value="1"/>
</dbReference>
<dbReference type="SUPFAM" id="SSF46946">
    <property type="entry name" value="S13-like H2TH domain"/>
    <property type="match status" value="1"/>
</dbReference>
<dbReference type="PROSITE" id="PS51068">
    <property type="entry name" value="FPG_CAT"/>
    <property type="match status" value="1"/>
</dbReference>
<accession>O80358</accession>
<accession>O80359</accession>
<accession>Q9SBB4</accession>
<organism>
    <name type="scientific">Arabidopsis thaliana</name>
    <name type="common">Mouse-ear cress</name>
    <dbReference type="NCBI Taxonomy" id="3702"/>
    <lineage>
        <taxon>Eukaryota</taxon>
        <taxon>Viridiplantae</taxon>
        <taxon>Streptophyta</taxon>
        <taxon>Embryophyta</taxon>
        <taxon>Tracheophyta</taxon>
        <taxon>Spermatophyta</taxon>
        <taxon>Magnoliopsida</taxon>
        <taxon>eudicotyledons</taxon>
        <taxon>Gunneridae</taxon>
        <taxon>Pentapetalae</taxon>
        <taxon>rosids</taxon>
        <taxon>malvids</taxon>
        <taxon>Brassicales</taxon>
        <taxon>Brassicaceae</taxon>
        <taxon>Camelineae</taxon>
        <taxon>Arabidopsis</taxon>
    </lineage>
</organism>
<name>FPG_ARATH</name>
<keyword id="KW-0002">3D-structure</keyword>
<keyword id="KW-0025">Alternative splicing</keyword>
<keyword id="KW-0227">DNA damage</keyword>
<keyword id="KW-0234">DNA repair</keyword>
<keyword id="KW-0238">DNA-binding</keyword>
<keyword id="KW-0326">Glycosidase</keyword>
<keyword id="KW-0378">Hydrolase</keyword>
<keyword id="KW-0456">Lyase</keyword>
<keyword id="KW-0511">Multifunctional enzyme</keyword>
<keyword id="KW-0539">Nucleus</keyword>
<keyword id="KW-1185">Reference proteome</keyword>
<comment type="function">
    <text evidence="4 5 6">Involved in base excision repair of DNA damaged by oxidation or by mutagenic agents. Acts as a DNA glycosylase that recognizes and removes damaged bases. Can process efficiently 4,6-diamino-5-formamidopyrimidine (FapyA), 2,6-diamino-4- hydroxy-5-formamidopyrimidine (FapyG) and the further oxidation products of 8-oxoguanine (8-oxoG), such as guanidinohydantoin and spiroiminodihydantoin. Has marginal activity towards 8-oxoG. Has AP (apurinic/apyrimidinic) lyase activity. Cleaves the DNA backbone by beta-delta elimination to generate a single-strand break at the site of the removed base with both 3'- and 5'-phosphates.</text>
</comment>
<comment type="catalytic activity">
    <reaction evidence="5">
        <text>Hydrolysis of DNA containing ring-opened 7-methylguanine residues, releasing 2,6-diamino-4-hydroxy-5-(N-methyl)formamidopyrimidine.</text>
        <dbReference type="EC" id="3.2.2.23"/>
    </reaction>
</comment>
<comment type="catalytic activity">
    <reaction evidence="2 5">
        <text>2'-deoxyribonucleotide-(2'-deoxyribose 5'-phosphate)-2'-deoxyribonucleotide-DNA = a 3'-end 2'-deoxyribonucleotide-(2,3-dehydro-2,3-deoxyribose 5'-phosphate)-DNA + a 5'-end 5'-phospho-2'-deoxyribonucleoside-DNA + H(+)</text>
        <dbReference type="Rhea" id="RHEA:66592"/>
        <dbReference type="Rhea" id="RHEA-COMP:13180"/>
        <dbReference type="Rhea" id="RHEA-COMP:16897"/>
        <dbReference type="Rhea" id="RHEA-COMP:17067"/>
        <dbReference type="ChEBI" id="CHEBI:15378"/>
        <dbReference type="ChEBI" id="CHEBI:136412"/>
        <dbReference type="ChEBI" id="CHEBI:157695"/>
        <dbReference type="ChEBI" id="CHEBI:167181"/>
        <dbReference type="EC" id="4.2.99.18"/>
    </reaction>
</comment>
<comment type="subunit">
    <text evidence="10">Monomer.</text>
</comment>
<comment type="subcellular location">
    <subcellularLocation>
        <location evidence="1">Nucleus</location>
    </subcellularLocation>
</comment>
<comment type="alternative products">
    <event type="alternative splicing"/>
    <isoform>
        <id>O80358-1</id>
        <name>1</name>
        <sequence type="displayed"/>
    </isoform>
    <isoform>
        <id>O80358-2</id>
        <name>2</name>
        <sequence type="described" ref="VSP_045377 VSP_045378"/>
    </isoform>
</comment>
<comment type="tissue specificity">
    <text evidence="6">Expressed in leaves (at protein levels).</text>
</comment>
<comment type="disruption phenotype">
    <text evidence="7">No visible phenotype under normal growth conditions or UV-A irradiation stress.</text>
</comment>
<comment type="similarity">
    <text evidence="2">Belongs to the FPG family.</text>
</comment>
<sequence length="390" mass="43194">MPELPEVEAARRAIEENCLGKKIKRVIIADDNKVIHGISPSDFQTSILGKTIISARRKGKNLWLELDSPPFPSFQFGMAGAIYIKGVAVTKYKRSAVKDSEEWPSKYSKFFVELDDGLELSFTDKRRFAKVRLLANPTSVSPISELGPDALLEPMTVDEFAESLAKKKITIKPLLLDQGYISGIGNWIADEVLYQARIHPLQTASSLSKEQCEALHTSIKEVIEKAVEVDADSSQFPSYWIFHNREKKPGKAFVDGKKIDFITAGGRTTAYVPELQKLYGKDAEKAAKVRPAKRGVKPKEDDGDGEEDEQETEKEDESAKSKKGQKPRGGRGKKPASKTKTEESDDDGDDSEAEEEVVKPKGRGTKPAIKRKSEEKATSQAGKKPKGRKS</sequence>
<feature type="initiator methionine" description="Removed" evidence="1">
    <location>
        <position position="1"/>
    </location>
</feature>
<feature type="chain" id="PRO_0000421261" description="Formamidopyrimidine-DNA glycosylase">
    <location>
        <begin position="2"/>
        <end position="390"/>
    </location>
</feature>
<feature type="region of interest" description="Disordered" evidence="3">
    <location>
        <begin position="283"/>
        <end position="390"/>
    </location>
</feature>
<feature type="compositionally biased region" description="Acidic residues" evidence="3">
    <location>
        <begin position="301"/>
        <end position="316"/>
    </location>
</feature>
<feature type="compositionally biased region" description="Basic residues" evidence="3">
    <location>
        <begin position="321"/>
        <end position="337"/>
    </location>
</feature>
<feature type="compositionally biased region" description="Acidic residues" evidence="3">
    <location>
        <begin position="343"/>
        <end position="355"/>
    </location>
</feature>
<feature type="compositionally biased region" description="Basic residues" evidence="3">
    <location>
        <begin position="360"/>
        <end position="370"/>
    </location>
</feature>
<feature type="active site" description="Schiff-base intermediate with DNA" evidence="2">
    <location>
        <position position="2"/>
    </location>
</feature>
<feature type="active site" description="Proton donor" evidence="2">
    <location>
        <position position="3"/>
    </location>
</feature>
<feature type="active site" description="Proton donor; for beta-elimination activity" evidence="2">
    <location>
        <position position="60"/>
    </location>
</feature>
<feature type="binding site" evidence="5">
    <location>
        <position position="107"/>
    </location>
    <ligand>
        <name>DNA</name>
        <dbReference type="ChEBI" id="CHEBI:16991"/>
    </ligand>
</feature>
<feature type="binding site" evidence="1">
    <location>
        <position position="126"/>
    </location>
    <ligand>
        <name>DNA</name>
        <dbReference type="ChEBI" id="CHEBI:16991"/>
    </ligand>
</feature>
<feature type="binding site" evidence="5">
    <location>
        <position position="167"/>
    </location>
    <ligand>
        <name>DNA</name>
        <dbReference type="ChEBI" id="CHEBI:16991"/>
    </ligand>
</feature>
<feature type="binding site" evidence="5">
    <location>
        <position position="186"/>
    </location>
    <ligand>
        <name>DNA</name>
        <dbReference type="ChEBI" id="CHEBI:16991"/>
    </ligand>
</feature>
<feature type="splice variant" id="VSP_045377" description="In isoform 2." evidence="8">
    <original>EKAVEVDADSSQFPSYWIFHNREKKPGKAFVDGKKIDFITAGGRTTAYVPE</original>
    <variation>QHAVQVNADSKEFPVEWLFHFRWGKKAGKVNGKLSHHLSINLMKQNLGFCR</variation>
    <location>
        <begin position="224"/>
        <end position="274"/>
    </location>
</feature>
<feature type="splice variant" id="VSP_045378" description="In isoform 2." evidence="8">
    <location>
        <begin position="275"/>
        <end position="390"/>
    </location>
</feature>
<feature type="sequence conflict" description="In Ref. 2; AAC97952." evidence="9" ref="2">
    <original>Y</original>
    <variation>N</variation>
    <location>
        <position position="239"/>
    </location>
</feature>
<feature type="helix" evidence="12">
    <location>
        <begin position="4"/>
        <end position="17"/>
    </location>
</feature>
<feature type="turn" evidence="13">
    <location>
        <begin position="18"/>
        <end position="20"/>
    </location>
</feature>
<feature type="strand" evidence="12">
    <location>
        <begin position="22"/>
        <end position="28"/>
    </location>
</feature>
<feature type="turn" evidence="12">
    <location>
        <begin position="32"/>
        <end position="34"/>
    </location>
</feature>
<feature type="helix" evidence="12">
    <location>
        <begin position="40"/>
        <end position="47"/>
    </location>
</feature>
<feature type="strand" evidence="12">
    <location>
        <begin position="51"/>
        <end position="58"/>
    </location>
</feature>
<feature type="strand" evidence="12">
    <location>
        <begin position="61"/>
        <end position="69"/>
    </location>
</feature>
<feature type="strand" evidence="12">
    <location>
        <begin position="71"/>
        <end position="75"/>
    </location>
</feature>
<feature type="turn" evidence="12">
    <location>
        <begin position="77"/>
        <end position="79"/>
    </location>
</feature>
<feature type="strand" evidence="12">
    <location>
        <begin position="81"/>
        <end position="85"/>
    </location>
</feature>
<feature type="helix" evidence="11">
    <location>
        <begin position="93"/>
        <end position="95"/>
    </location>
</feature>
<feature type="strand" evidence="12">
    <location>
        <begin position="108"/>
        <end position="114"/>
    </location>
</feature>
<feature type="helix" evidence="11">
    <location>
        <begin position="115"/>
        <end position="117"/>
    </location>
</feature>
<feature type="strand" evidence="12">
    <location>
        <begin position="119"/>
        <end position="123"/>
    </location>
</feature>
<feature type="strand" evidence="12">
    <location>
        <begin position="125"/>
        <end position="127"/>
    </location>
</feature>
<feature type="strand" evidence="12">
    <location>
        <begin position="130"/>
        <end position="135"/>
    </location>
</feature>
<feature type="helix" evidence="12">
    <location>
        <begin position="137"/>
        <end position="139"/>
    </location>
</feature>
<feature type="helix" evidence="12">
    <location>
        <begin position="143"/>
        <end position="145"/>
    </location>
</feature>
<feature type="turn" evidence="12">
    <location>
        <begin position="150"/>
        <end position="152"/>
    </location>
</feature>
<feature type="helix" evidence="12">
    <location>
        <begin position="157"/>
        <end position="165"/>
    </location>
</feature>
<feature type="helix" evidence="12">
    <location>
        <begin position="171"/>
        <end position="176"/>
    </location>
</feature>
<feature type="turn" evidence="12">
    <location>
        <begin position="178"/>
        <end position="180"/>
    </location>
</feature>
<feature type="strand" evidence="12">
    <location>
        <begin position="181"/>
        <end position="183"/>
    </location>
</feature>
<feature type="helix" evidence="12">
    <location>
        <begin position="186"/>
        <end position="195"/>
    </location>
</feature>
<feature type="helix" evidence="12">
    <location>
        <begin position="204"/>
        <end position="206"/>
    </location>
</feature>
<feature type="helix" evidence="12">
    <location>
        <begin position="209"/>
        <end position="228"/>
    </location>
</feature>
<feature type="turn" evidence="12">
    <location>
        <begin position="229"/>
        <end position="231"/>
    </location>
</feature>
<feature type="helix" evidence="12">
    <location>
        <begin position="233"/>
        <end position="235"/>
    </location>
</feature>
<feature type="helix" evidence="12">
    <location>
        <begin position="241"/>
        <end position="244"/>
    </location>
</feature>
<feature type="strand" evidence="11">
    <location>
        <begin position="260"/>
        <end position="264"/>
    </location>
</feature>
<feature type="strand" evidence="11">
    <location>
        <begin position="267"/>
        <end position="271"/>
    </location>
</feature>
<feature type="turn" evidence="12">
    <location>
        <begin position="273"/>
        <end position="275"/>
    </location>
</feature>
<feature type="helix" evidence="12">
    <location>
        <begin position="280"/>
        <end position="286"/>
    </location>
</feature>
<reference key="1">
    <citation type="journal article" date="1998" name="Mol. Gen. Genet.">
        <title>Molecular cloning of AtMMH, an Arabidopsis thaliana ortholog of the Escherichia coli mutM gene, and analysis of functional domains of its product.</title>
        <authorList>
            <person name="Ohtsubo T."/>
            <person name="Matsuda O."/>
            <person name="Iba K."/>
            <person name="Terashima I."/>
            <person name="Sekiguchi M."/>
            <person name="Nakabeppu Y."/>
        </authorList>
    </citation>
    <scope>NUCLEOTIDE SEQUENCE [GENOMIC DNA]</scope>
    <scope>FUNCTION</scope>
    <scope>TISSUE SPECIFICITY</scope>
    <source>
        <strain>cv. Columbia</strain>
    </source>
</reference>
<reference key="2">
    <citation type="journal article" date="2001" name="J. Photochem. Photobiol. B">
        <title>Multiple forms of formamidopyrimidine-DNA glycosylase produced by alternative splicing in Arabidopsis thaliana.</title>
        <authorList>
            <person name="Murphy T.M."/>
            <person name="Gao M.J."/>
        </authorList>
    </citation>
    <scope>NUCLEOTIDE SEQUENCE [MRNA] (ISOFORM 1)</scope>
    <source>
        <strain>cv. Landsberg erecta</strain>
    </source>
</reference>
<reference key="3">
    <citation type="journal article" date="2001" name="Photochem. Photobiol.">
        <title>Alternative forms of formamidopyrimidine-DNA glycosylase from Arabidopsis thaliana.</title>
        <authorList>
            <person name="Gao M.J."/>
            <person name="Murphy T.M."/>
        </authorList>
    </citation>
    <scope>NUCLEOTIDE SEQUENCE [MRNA] (ISOFORM 2)</scope>
    <scope>FUNCTION</scope>
    <source>
        <strain>cv. Landsberg erecta</strain>
    </source>
</reference>
<reference key="4">
    <citation type="journal article" date="2000" name="Nature">
        <title>Sequence and analysis of chromosome 1 of the plant Arabidopsis thaliana.</title>
        <authorList>
            <person name="Theologis A."/>
            <person name="Ecker J.R."/>
            <person name="Palm C.J."/>
            <person name="Federspiel N.A."/>
            <person name="Kaul S."/>
            <person name="White O."/>
            <person name="Alonso J."/>
            <person name="Altafi H."/>
            <person name="Araujo R."/>
            <person name="Bowman C.L."/>
            <person name="Brooks S.Y."/>
            <person name="Buehler E."/>
            <person name="Chan A."/>
            <person name="Chao Q."/>
            <person name="Chen H."/>
            <person name="Cheuk R.F."/>
            <person name="Chin C.W."/>
            <person name="Chung M.K."/>
            <person name="Conn L."/>
            <person name="Conway A.B."/>
            <person name="Conway A.R."/>
            <person name="Creasy T.H."/>
            <person name="Dewar K."/>
            <person name="Dunn P."/>
            <person name="Etgu P."/>
            <person name="Feldblyum T.V."/>
            <person name="Feng J.-D."/>
            <person name="Fong B."/>
            <person name="Fujii C.Y."/>
            <person name="Gill J.E."/>
            <person name="Goldsmith A.D."/>
            <person name="Haas B."/>
            <person name="Hansen N.F."/>
            <person name="Hughes B."/>
            <person name="Huizar L."/>
            <person name="Hunter J.L."/>
            <person name="Jenkins J."/>
            <person name="Johnson-Hopson C."/>
            <person name="Khan S."/>
            <person name="Khaykin E."/>
            <person name="Kim C.J."/>
            <person name="Koo H.L."/>
            <person name="Kremenetskaia I."/>
            <person name="Kurtz D.B."/>
            <person name="Kwan A."/>
            <person name="Lam B."/>
            <person name="Langin-Hooper S."/>
            <person name="Lee A."/>
            <person name="Lee J.M."/>
            <person name="Lenz C.A."/>
            <person name="Li J.H."/>
            <person name="Li Y.-P."/>
            <person name="Lin X."/>
            <person name="Liu S.X."/>
            <person name="Liu Z.A."/>
            <person name="Luros J.S."/>
            <person name="Maiti R."/>
            <person name="Marziali A."/>
            <person name="Militscher J."/>
            <person name="Miranda M."/>
            <person name="Nguyen M."/>
            <person name="Nierman W.C."/>
            <person name="Osborne B.I."/>
            <person name="Pai G."/>
            <person name="Peterson J."/>
            <person name="Pham P.K."/>
            <person name="Rizzo M."/>
            <person name="Rooney T."/>
            <person name="Rowley D."/>
            <person name="Sakano H."/>
            <person name="Salzberg S.L."/>
            <person name="Schwartz J.R."/>
            <person name="Shinn P."/>
            <person name="Southwick A.M."/>
            <person name="Sun H."/>
            <person name="Tallon L.J."/>
            <person name="Tambunga G."/>
            <person name="Toriumi M.J."/>
            <person name="Town C.D."/>
            <person name="Utterback T."/>
            <person name="Van Aken S."/>
            <person name="Vaysberg M."/>
            <person name="Vysotskaia V.S."/>
            <person name="Walker M."/>
            <person name="Wu D."/>
            <person name="Yu G."/>
            <person name="Fraser C.M."/>
            <person name="Venter J.C."/>
            <person name="Davis R.W."/>
        </authorList>
    </citation>
    <scope>NUCLEOTIDE SEQUENCE [LARGE SCALE GENOMIC DNA]</scope>
    <source>
        <strain>cv. Columbia</strain>
    </source>
</reference>
<reference key="5">
    <citation type="journal article" date="2017" name="Plant J.">
        <title>Araport11: a complete reannotation of the Arabidopsis thaliana reference genome.</title>
        <authorList>
            <person name="Cheng C.Y."/>
            <person name="Krishnakumar V."/>
            <person name="Chan A.P."/>
            <person name="Thibaud-Nissen F."/>
            <person name="Schobel S."/>
            <person name="Town C.D."/>
        </authorList>
    </citation>
    <scope>GENOME REANNOTATION</scope>
    <source>
        <strain>cv. Columbia</strain>
    </source>
</reference>
<reference key="6">
    <citation type="submission" date="2008-08" db="EMBL/GenBank/DDBJ databases">
        <title>Arabidopsis ORF clones.</title>
        <authorList>
            <person name="De Los Reyes C."/>
            <person name="Quan R."/>
            <person name="Chen H."/>
            <person name="Bautista V."/>
            <person name="Kim C.J."/>
            <person name="Ecker J.R."/>
        </authorList>
    </citation>
    <scope>NUCLEOTIDE SEQUENCE [LARGE SCALE MRNA] (ISOFORM 1)</scope>
</reference>
<reference key="7">
    <citation type="journal article" date="2005" name="Physiol. Plantarum">
        <title>What is base excision repair good for?: knockout mutants for FPG and OGG glycosylase genes in Arabidopsis.</title>
        <authorList>
            <person name="Murphy T.M."/>
        </authorList>
    </citation>
    <scope>DISRUPTION PHENOTYPE</scope>
</reference>
<reference key="8">
    <citation type="journal article" date="2009" name="Plant Physiol.">
        <title>Large-scale Arabidopsis phosphoproteome profiling reveals novel chloroplast kinase substrates and phosphorylation networks.</title>
        <authorList>
            <person name="Reiland S."/>
            <person name="Messerli G."/>
            <person name="Baerenfaller K."/>
            <person name="Gerrits B."/>
            <person name="Endler A."/>
            <person name="Grossmann J."/>
            <person name="Gruissem W."/>
            <person name="Baginsky S."/>
        </authorList>
    </citation>
    <scope>IDENTIFICATION BY MASS SPECTROMETRY [LARGE SCALE ANALYSIS]</scope>
</reference>
<reference key="9">
    <citation type="journal article" date="2012" name="DNA Repair">
        <title>Structural and biochemical studies of a plant formamidopyrimidine-DNA glycosylase reveal why eukaryotic Fpg glycosylases do not excise 8-oxoguanine.</title>
        <authorList>
            <person name="Duclos S."/>
            <person name="Aller P."/>
            <person name="Jaruga P."/>
            <person name="Dizdaroglu M."/>
            <person name="Wallace S.S."/>
            <person name="Doublie S."/>
        </authorList>
    </citation>
    <scope>X-RAY CRYSTALLOGRAPHY (1.70 ANGSTROMS) OF 1-304 IN COMPLEX WITH DNA</scope>
    <scope>FUNCTION</scope>
    <scope>CATALYTIC ACTIVITY</scope>
    <scope>SUBUNIT</scope>
</reference>
<evidence type="ECO:0000250" key="1"/>
<evidence type="ECO:0000255" key="2">
    <source>
        <dbReference type="PROSITE-ProRule" id="PRU00392"/>
    </source>
</evidence>
<evidence type="ECO:0000256" key="3">
    <source>
        <dbReference type="SAM" id="MobiDB-lite"/>
    </source>
</evidence>
<evidence type="ECO:0000269" key="4">
    <source>
    </source>
</evidence>
<evidence type="ECO:0000269" key="5">
    <source>
    </source>
</evidence>
<evidence type="ECO:0000269" key="6">
    <source>
    </source>
</evidence>
<evidence type="ECO:0000269" key="7">
    <source ref="7"/>
</evidence>
<evidence type="ECO:0000303" key="8">
    <source>
    </source>
</evidence>
<evidence type="ECO:0000305" key="9"/>
<evidence type="ECO:0000305" key="10">
    <source>
    </source>
</evidence>
<evidence type="ECO:0007829" key="11">
    <source>
        <dbReference type="PDB" id="3TWK"/>
    </source>
</evidence>
<evidence type="ECO:0007829" key="12">
    <source>
        <dbReference type="PDB" id="3TWL"/>
    </source>
</evidence>
<evidence type="ECO:0007829" key="13">
    <source>
        <dbReference type="PDB" id="3TWM"/>
    </source>
</evidence>